<feature type="chain" id="PRO_0000049621" description="Anti-sigma-YlaC factor YlaD">
    <location>
        <begin position="1"/>
        <end position="97"/>
    </location>
</feature>
<feature type="transmembrane region" description="Helical" evidence="2">
    <location>
        <begin position="71"/>
        <end position="93"/>
    </location>
</feature>
<feature type="binding site" evidence="1">
    <location>
        <position position="29"/>
    </location>
    <ligand>
        <name>Zn(2+)</name>
        <dbReference type="ChEBI" id="CHEBI:29105"/>
    </ligand>
</feature>
<feature type="binding site" evidence="1">
    <location>
        <position position="33"/>
    </location>
    <ligand>
        <name>Zn(2+)</name>
        <dbReference type="ChEBI" id="CHEBI:29105"/>
    </ligand>
</feature>
<feature type="binding site" evidence="1">
    <location>
        <position position="36"/>
    </location>
    <ligand>
        <name>Zn(2+)</name>
        <dbReference type="ChEBI" id="CHEBI:29105"/>
    </ligand>
</feature>
<sequence length="97" mass="11405">MTCFLVRDLLPLYLEGDCKRETEHVIEEHLKMCSSCRDMYDTMAEPFELESEQAVEEAYLPEEELRFKQRYYGLLIMKAACWFGAAVAMMLIIKLLI</sequence>
<dbReference type="EMBL" id="Z97025">
    <property type="protein sequence ID" value="CAB09709.1"/>
    <property type="molecule type" value="Genomic_DNA"/>
</dbReference>
<dbReference type="EMBL" id="AL009126">
    <property type="protein sequence ID" value="CAB13347.1"/>
    <property type="molecule type" value="Genomic_DNA"/>
</dbReference>
<dbReference type="PIR" id="B69872">
    <property type="entry name" value="B69872"/>
</dbReference>
<dbReference type="SMR" id="O07628"/>
<dbReference type="FunCoup" id="O07628">
    <property type="interactions" value="99"/>
</dbReference>
<dbReference type="IntAct" id="O07628">
    <property type="interactions" value="2"/>
</dbReference>
<dbReference type="STRING" id="224308.BSU14740"/>
<dbReference type="PaxDb" id="224308-BSU14740"/>
<dbReference type="EnsemblBacteria" id="CAB13347">
    <property type="protein sequence ID" value="CAB13347"/>
    <property type="gene ID" value="BSU_14740"/>
</dbReference>
<dbReference type="GeneID" id="935961"/>
<dbReference type="KEGG" id="bsu:BSU14740"/>
<dbReference type="PATRIC" id="fig|224308.179.peg.1608"/>
<dbReference type="InParanoid" id="O07628"/>
<dbReference type="OrthoDB" id="6194834at2"/>
<dbReference type="BioCyc" id="BSUB:BSU14740-MONOMER"/>
<dbReference type="Proteomes" id="UP000001570">
    <property type="component" value="Chromosome"/>
</dbReference>
<dbReference type="GO" id="GO:0005886">
    <property type="term" value="C:plasma membrane"/>
    <property type="evidence" value="ECO:0007669"/>
    <property type="project" value="UniProtKB-SubCell"/>
</dbReference>
<dbReference type="GO" id="GO:0046872">
    <property type="term" value="F:metal ion binding"/>
    <property type="evidence" value="ECO:0007669"/>
    <property type="project" value="UniProtKB-KW"/>
</dbReference>
<dbReference type="InterPro" id="IPR027383">
    <property type="entry name" value="Znf_put"/>
</dbReference>
<dbReference type="Pfam" id="PF13490">
    <property type="entry name" value="zf-HC2"/>
    <property type="match status" value="1"/>
</dbReference>
<name>YLAD_BACSU</name>
<organism>
    <name type="scientific">Bacillus subtilis (strain 168)</name>
    <dbReference type="NCBI Taxonomy" id="224308"/>
    <lineage>
        <taxon>Bacteria</taxon>
        <taxon>Bacillati</taxon>
        <taxon>Bacillota</taxon>
        <taxon>Bacilli</taxon>
        <taxon>Bacillales</taxon>
        <taxon>Bacillaceae</taxon>
        <taxon>Bacillus</taxon>
    </lineage>
</organism>
<keyword id="KW-1003">Cell membrane</keyword>
<keyword id="KW-0472">Membrane</keyword>
<keyword id="KW-0479">Metal-binding</keyword>
<keyword id="KW-1185">Reference proteome</keyword>
<keyword id="KW-0812">Transmembrane</keyword>
<keyword id="KW-1133">Transmembrane helix</keyword>
<keyword id="KW-0862">Zinc</keyword>
<proteinExistence type="inferred from homology"/>
<gene>
    <name type="primary">ylaD</name>
    <name type="ordered locus">BSU14740</name>
</gene>
<reference key="1">
    <citation type="submission" date="1997-06" db="EMBL/GenBank/DDBJ databases">
        <authorList>
            <person name="Purnell B."/>
            <person name="Presecan E."/>
            <person name="Glaser P."/>
            <person name="Richou A."/>
            <person name="Danchin A."/>
            <person name="Goffeau A."/>
        </authorList>
    </citation>
    <scope>NUCLEOTIDE SEQUENCE [GENOMIC DNA]</scope>
    <source>
        <strain>168</strain>
    </source>
</reference>
<reference key="2">
    <citation type="journal article" date="1997" name="Nature">
        <title>The complete genome sequence of the Gram-positive bacterium Bacillus subtilis.</title>
        <authorList>
            <person name="Kunst F."/>
            <person name="Ogasawara N."/>
            <person name="Moszer I."/>
            <person name="Albertini A.M."/>
            <person name="Alloni G."/>
            <person name="Azevedo V."/>
            <person name="Bertero M.G."/>
            <person name="Bessieres P."/>
            <person name="Bolotin A."/>
            <person name="Borchert S."/>
            <person name="Borriss R."/>
            <person name="Boursier L."/>
            <person name="Brans A."/>
            <person name="Braun M."/>
            <person name="Brignell S.C."/>
            <person name="Bron S."/>
            <person name="Brouillet S."/>
            <person name="Bruschi C.V."/>
            <person name="Caldwell B."/>
            <person name="Capuano V."/>
            <person name="Carter N.M."/>
            <person name="Choi S.-K."/>
            <person name="Codani J.-J."/>
            <person name="Connerton I.F."/>
            <person name="Cummings N.J."/>
            <person name="Daniel R.A."/>
            <person name="Denizot F."/>
            <person name="Devine K.M."/>
            <person name="Duesterhoeft A."/>
            <person name="Ehrlich S.D."/>
            <person name="Emmerson P.T."/>
            <person name="Entian K.-D."/>
            <person name="Errington J."/>
            <person name="Fabret C."/>
            <person name="Ferrari E."/>
            <person name="Foulger D."/>
            <person name="Fritz C."/>
            <person name="Fujita M."/>
            <person name="Fujita Y."/>
            <person name="Fuma S."/>
            <person name="Galizzi A."/>
            <person name="Galleron N."/>
            <person name="Ghim S.-Y."/>
            <person name="Glaser P."/>
            <person name="Goffeau A."/>
            <person name="Golightly E.J."/>
            <person name="Grandi G."/>
            <person name="Guiseppi G."/>
            <person name="Guy B.J."/>
            <person name="Haga K."/>
            <person name="Haiech J."/>
            <person name="Harwood C.R."/>
            <person name="Henaut A."/>
            <person name="Hilbert H."/>
            <person name="Holsappel S."/>
            <person name="Hosono S."/>
            <person name="Hullo M.-F."/>
            <person name="Itaya M."/>
            <person name="Jones L.-M."/>
            <person name="Joris B."/>
            <person name="Karamata D."/>
            <person name="Kasahara Y."/>
            <person name="Klaerr-Blanchard M."/>
            <person name="Klein C."/>
            <person name="Kobayashi Y."/>
            <person name="Koetter P."/>
            <person name="Koningstein G."/>
            <person name="Krogh S."/>
            <person name="Kumano M."/>
            <person name="Kurita K."/>
            <person name="Lapidus A."/>
            <person name="Lardinois S."/>
            <person name="Lauber J."/>
            <person name="Lazarevic V."/>
            <person name="Lee S.-M."/>
            <person name="Levine A."/>
            <person name="Liu H."/>
            <person name="Masuda S."/>
            <person name="Mauel C."/>
            <person name="Medigue C."/>
            <person name="Medina N."/>
            <person name="Mellado R.P."/>
            <person name="Mizuno M."/>
            <person name="Moestl D."/>
            <person name="Nakai S."/>
            <person name="Noback M."/>
            <person name="Noone D."/>
            <person name="O'Reilly M."/>
            <person name="Ogawa K."/>
            <person name="Ogiwara A."/>
            <person name="Oudega B."/>
            <person name="Park S.-H."/>
            <person name="Parro V."/>
            <person name="Pohl T.M."/>
            <person name="Portetelle D."/>
            <person name="Porwollik S."/>
            <person name="Prescott A.M."/>
            <person name="Presecan E."/>
            <person name="Pujic P."/>
            <person name="Purnelle B."/>
            <person name="Rapoport G."/>
            <person name="Rey M."/>
            <person name="Reynolds S."/>
            <person name="Rieger M."/>
            <person name="Rivolta C."/>
            <person name="Rocha E."/>
            <person name="Roche B."/>
            <person name="Rose M."/>
            <person name="Sadaie Y."/>
            <person name="Sato T."/>
            <person name="Scanlan E."/>
            <person name="Schleich S."/>
            <person name="Schroeter R."/>
            <person name="Scoffone F."/>
            <person name="Sekiguchi J."/>
            <person name="Sekowska A."/>
            <person name="Seror S.J."/>
            <person name="Serror P."/>
            <person name="Shin B.-S."/>
            <person name="Soldo B."/>
            <person name="Sorokin A."/>
            <person name="Tacconi E."/>
            <person name="Takagi T."/>
            <person name="Takahashi H."/>
            <person name="Takemaru K."/>
            <person name="Takeuchi M."/>
            <person name="Tamakoshi A."/>
            <person name="Tanaka T."/>
            <person name="Terpstra P."/>
            <person name="Tognoni A."/>
            <person name="Tosato V."/>
            <person name="Uchiyama S."/>
            <person name="Vandenbol M."/>
            <person name="Vannier F."/>
            <person name="Vassarotti A."/>
            <person name="Viari A."/>
            <person name="Wambutt R."/>
            <person name="Wedler E."/>
            <person name="Wedler H."/>
            <person name="Weitzenegger T."/>
            <person name="Winters P."/>
            <person name="Wipat A."/>
            <person name="Yamamoto H."/>
            <person name="Yamane K."/>
            <person name="Yasumoto K."/>
            <person name="Yata K."/>
            <person name="Yoshida K."/>
            <person name="Yoshikawa H.-F."/>
            <person name="Zumstein E."/>
            <person name="Yoshikawa H."/>
            <person name="Danchin A."/>
        </authorList>
    </citation>
    <scope>NUCLEOTIDE SEQUENCE [LARGE SCALE GENOMIC DNA]</scope>
    <source>
        <strain>168</strain>
    </source>
</reference>
<reference key="3">
    <citation type="journal article" date="2006" name="J. Microbiol.">
        <title>YlaC is an extracytoplasmic function (ECF) sigma factor contributing to hydrogen peroxide resistance in Bacillus subtilis.</title>
        <authorList>
            <person name="Ryu H.-B."/>
            <person name="Shin I."/>
            <person name="Yim H.-S."/>
            <person name="Kang S.-O."/>
        </authorList>
    </citation>
    <scope>FUNCTION</scope>
</reference>
<accession>O07628</accession>
<protein>
    <recommendedName>
        <fullName>Anti-sigma-YlaC factor YlaD</fullName>
    </recommendedName>
</protein>
<comment type="function">
    <text evidence="3">Anti-sigma factor for YlaC.</text>
</comment>
<comment type="cofactor">
    <cofactor evidence="1">
        <name>Zn(2+)</name>
        <dbReference type="ChEBI" id="CHEBI:29105"/>
    </cofactor>
    <text evidence="1">Binds 1 Zn(2+) ion per subunit.</text>
</comment>
<comment type="subcellular location">
    <subcellularLocation>
        <location>Cell membrane</location>
        <topology>Single-pass membrane protein</topology>
    </subcellularLocation>
</comment>
<comment type="miscellaneous">
    <text>The interaction between YlaC and YlaD may be regulated by the redox state of YlaD.</text>
</comment>
<comment type="similarity">
    <text evidence="4">Belongs to the zinc-associated anti-sigma factor (ZAS) superfamily.</text>
</comment>
<evidence type="ECO:0000250" key="1"/>
<evidence type="ECO:0000255" key="2"/>
<evidence type="ECO:0000269" key="3">
    <source>
    </source>
</evidence>
<evidence type="ECO:0000305" key="4"/>